<protein>
    <recommendedName>
        <fullName evidence="1">ATP synthase subunit alpha</fullName>
        <ecNumber evidence="1">7.1.2.2</ecNumber>
    </recommendedName>
    <alternativeName>
        <fullName evidence="1">ATP synthase F1 sector subunit alpha</fullName>
    </alternativeName>
    <alternativeName>
        <fullName evidence="1">F-ATPase subunit alpha</fullName>
    </alternativeName>
</protein>
<sequence>MSIRAEEISALIKQQIENYQSEIEVSDVGTVIQVGDGIARAHGLDNVMAGELVEFSNGVMGLAQNLEENNVGIIILGPYTEIREGDEVRRTGRIMQVPVGKELIGRVVNPLGQPVDGLGPINTTNTRPIESPAPGVMDRKSVHEPLQTGIKAIDALVPIGRGQRELIIGDRQTGKTAVALDTIINQKDEDMICIYVAIGQKESTVRNVVETLRKHGALEYTIVVTASASQPAPLLYLAPYAGVTMGEEFMYNGKHVLVVYDDLSKQAAAYRELSLLLRRPPGREAYPGDVFYLHSRLLERAAKLSDAKGGGSLTALPFIETQAGDVSAYIPTNVISITDGQIFLQSDLFFSGVRPAIDAGTSVSRVGGSAQIKAMSKVSGTLRLDLASYRELEAFAQFGSDLDKATQAKLNRGARTVEVLKQGLHKPLRVEKQVIILYALTRGFLDDIPVVDITRFEEEFHAWLDSNATDLLEEIRTTKKLADDDKFAAAINGFKKVFVASE</sequence>
<dbReference type="EC" id="7.1.2.2" evidence="1"/>
<dbReference type="EMBL" id="AE017194">
    <property type="protein sequence ID" value="AAS44332.1"/>
    <property type="molecule type" value="Genomic_DNA"/>
</dbReference>
<dbReference type="SMR" id="Q72XE6"/>
<dbReference type="KEGG" id="bca:BCE_5432"/>
<dbReference type="HOGENOM" id="CLU_010091_2_1_9"/>
<dbReference type="Proteomes" id="UP000002527">
    <property type="component" value="Chromosome"/>
</dbReference>
<dbReference type="GO" id="GO:0005886">
    <property type="term" value="C:plasma membrane"/>
    <property type="evidence" value="ECO:0007669"/>
    <property type="project" value="UniProtKB-SubCell"/>
</dbReference>
<dbReference type="GO" id="GO:0045259">
    <property type="term" value="C:proton-transporting ATP synthase complex"/>
    <property type="evidence" value="ECO:0007669"/>
    <property type="project" value="UniProtKB-KW"/>
</dbReference>
<dbReference type="GO" id="GO:0043531">
    <property type="term" value="F:ADP binding"/>
    <property type="evidence" value="ECO:0007669"/>
    <property type="project" value="TreeGrafter"/>
</dbReference>
<dbReference type="GO" id="GO:0005524">
    <property type="term" value="F:ATP binding"/>
    <property type="evidence" value="ECO:0007669"/>
    <property type="project" value="UniProtKB-UniRule"/>
</dbReference>
<dbReference type="GO" id="GO:0046933">
    <property type="term" value="F:proton-transporting ATP synthase activity, rotational mechanism"/>
    <property type="evidence" value="ECO:0007669"/>
    <property type="project" value="UniProtKB-UniRule"/>
</dbReference>
<dbReference type="CDD" id="cd18113">
    <property type="entry name" value="ATP-synt_F1_alpha_C"/>
    <property type="match status" value="1"/>
</dbReference>
<dbReference type="CDD" id="cd18116">
    <property type="entry name" value="ATP-synt_F1_alpha_N"/>
    <property type="match status" value="1"/>
</dbReference>
<dbReference type="CDD" id="cd01132">
    <property type="entry name" value="F1-ATPase_alpha_CD"/>
    <property type="match status" value="1"/>
</dbReference>
<dbReference type="FunFam" id="1.20.150.20:FF:000001">
    <property type="entry name" value="ATP synthase subunit alpha"/>
    <property type="match status" value="1"/>
</dbReference>
<dbReference type="FunFam" id="2.40.30.20:FF:000001">
    <property type="entry name" value="ATP synthase subunit alpha"/>
    <property type="match status" value="1"/>
</dbReference>
<dbReference type="FunFam" id="3.40.50.300:FF:000002">
    <property type="entry name" value="ATP synthase subunit alpha"/>
    <property type="match status" value="1"/>
</dbReference>
<dbReference type="Gene3D" id="2.40.30.20">
    <property type="match status" value="1"/>
</dbReference>
<dbReference type="Gene3D" id="1.20.150.20">
    <property type="entry name" value="ATP synthase alpha/beta chain, C-terminal domain"/>
    <property type="match status" value="1"/>
</dbReference>
<dbReference type="Gene3D" id="3.40.50.300">
    <property type="entry name" value="P-loop containing nucleotide triphosphate hydrolases"/>
    <property type="match status" value="1"/>
</dbReference>
<dbReference type="HAMAP" id="MF_01346">
    <property type="entry name" value="ATP_synth_alpha_bact"/>
    <property type="match status" value="1"/>
</dbReference>
<dbReference type="InterPro" id="IPR023366">
    <property type="entry name" value="ATP_synth_asu-like_sf"/>
</dbReference>
<dbReference type="InterPro" id="IPR000793">
    <property type="entry name" value="ATP_synth_asu_C"/>
</dbReference>
<dbReference type="InterPro" id="IPR038376">
    <property type="entry name" value="ATP_synth_asu_C_sf"/>
</dbReference>
<dbReference type="InterPro" id="IPR033732">
    <property type="entry name" value="ATP_synth_F1_a_nt-bd_dom"/>
</dbReference>
<dbReference type="InterPro" id="IPR005294">
    <property type="entry name" value="ATP_synth_F1_asu"/>
</dbReference>
<dbReference type="InterPro" id="IPR020003">
    <property type="entry name" value="ATPase_a/bsu_AS"/>
</dbReference>
<dbReference type="InterPro" id="IPR004100">
    <property type="entry name" value="ATPase_F1/V1/A1_a/bsu_N"/>
</dbReference>
<dbReference type="InterPro" id="IPR036121">
    <property type="entry name" value="ATPase_F1/V1/A1_a/bsu_N_sf"/>
</dbReference>
<dbReference type="InterPro" id="IPR000194">
    <property type="entry name" value="ATPase_F1/V1/A1_a/bsu_nucl-bd"/>
</dbReference>
<dbReference type="InterPro" id="IPR027417">
    <property type="entry name" value="P-loop_NTPase"/>
</dbReference>
<dbReference type="NCBIfam" id="TIGR00962">
    <property type="entry name" value="atpA"/>
    <property type="match status" value="1"/>
</dbReference>
<dbReference type="NCBIfam" id="NF009884">
    <property type="entry name" value="PRK13343.1"/>
    <property type="match status" value="1"/>
</dbReference>
<dbReference type="PANTHER" id="PTHR48082">
    <property type="entry name" value="ATP SYNTHASE SUBUNIT ALPHA, MITOCHONDRIAL"/>
    <property type="match status" value="1"/>
</dbReference>
<dbReference type="PANTHER" id="PTHR48082:SF2">
    <property type="entry name" value="ATP SYNTHASE SUBUNIT ALPHA, MITOCHONDRIAL"/>
    <property type="match status" value="1"/>
</dbReference>
<dbReference type="Pfam" id="PF00006">
    <property type="entry name" value="ATP-synt_ab"/>
    <property type="match status" value="1"/>
</dbReference>
<dbReference type="Pfam" id="PF00306">
    <property type="entry name" value="ATP-synt_ab_C"/>
    <property type="match status" value="1"/>
</dbReference>
<dbReference type="Pfam" id="PF02874">
    <property type="entry name" value="ATP-synt_ab_N"/>
    <property type="match status" value="1"/>
</dbReference>
<dbReference type="PIRSF" id="PIRSF039088">
    <property type="entry name" value="F_ATPase_subunit_alpha"/>
    <property type="match status" value="1"/>
</dbReference>
<dbReference type="SUPFAM" id="SSF47917">
    <property type="entry name" value="C-terminal domain of alpha and beta subunits of F1 ATP synthase"/>
    <property type="match status" value="1"/>
</dbReference>
<dbReference type="SUPFAM" id="SSF50615">
    <property type="entry name" value="N-terminal domain of alpha and beta subunits of F1 ATP synthase"/>
    <property type="match status" value="1"/>
</dbReference>
<dbReference type="SUPFAM" id="SSF52540">
    <property type="entry name" value="P-loop containing nucleoside triphosphate hydrolases"/>
    <property type="match status" value="1"/>
</dbReference>
<dbReference type="PROSITE" id="PS00152">
    <property type="entry name" value="ATPASE_ALPHA_BETA"/>
    <property type="match status" value="1"/>
</dbReference>
<organism>
    <name type="scientific">Bacillus cereus (strain ATCC 10987 / NRS 248)</name>
    <dbReference type="NCBI Taxonomy" id="222523"/>
    <lineage>
        <taxon>Bacteria</taxon>
        <taxon>Bacillati</taxon>
        <taxon>Bacillota</taxon>
        <taxon>Bacilli</taxon>
        <taxon>Bacillales</taxon>
        <taxon>Bacillaceae</taxon>
        <taxon>Bacillus</taxon>
        <taxon>Bacillus cereus group</taxon>
    </lineage>
</organism>
<reference key="1">
    <citation type="journal article" date="2004" name="Nucleic Acids Res.">
        <title>The genome sequence of Bacillus cereus ATCC 10987 reveals metabolic adaptations and a large plasmid related to Bacillus anthracis pXO1.</title>
        <authorList>
            <person name="Rasko D.A."/>
            <person name="Ravel J."/>
            <person name="Oekstad O.A."/>
            <person name="Helgason E."/>
            <person name="Cer R.Z."/>
            <person name="Jiang L."/>
            <person name="Shores K.A."/>
            <person name="Fouts D.E."/>
            <person name="Tourasse N.J."/>
            <person name="Angiuoli S.V."/>
            <person name="Kolonay J.F."/>
            <person name="Nelson W.C."/>
            <person name="Kolstoe A.-B."/>
            <person name="Fraser C.M."/>
            <person name="Read T.D."/>
        </authorList>
    </citation>
    <scope>NUCLEOTIDE SEQUENCE [LARGE SCALE GENOMIC DNA]</scope>
    <source>
        <strain>ATCC 10987 / NRS 248</strain>
    </source>
</reference>
<evidence type="ECO:0000255" key="1">
    <source>
        <dbReference type="HAMAP-Rule" id="MF_01346"/>
    </source>
</evidence>
<evidence type="ECO:0000256" key="2">
    <source>
        <dbReference type="SAM" id="MobiDB-lite"/>
    </source>
</evidence>
<comment type="function">
    <text evidence="1">Produces ATP from ADP in the presence of a proton gradient across the membrane. The alpha chain is a regulatory subunit.</text>
</comment>
<comment type="catalytic activity">
    <reaction evidence="1">
        <text>ATP + H2O + 4 H(+)(in) = ADP + phosphate + 5 H(+)(out)</text>
        <dbReference type="Rhea" id="RHEA:57720"/>
        <dbReference type="ChEBI" id="CHEBI:15377"/>
        <dbReference type="ChEBI" id="CHEBI:15378"/>
        <dbReference type="ChEBI" id="CHEBI:30616"/>
        <dbReference type="ChEBI" id="CHEBI:43474"/>
        <dbReference type="ChEBI" id="CHEBI:456216"/>
        <dbReference type="EC" id="7.1.2.2"/>
    </reaction>
</comment>
<comment type="subunit">
    <text evidence="1">F-type ATPases have 2 components, CF(1) - the catalytic core - and CF(0) - the membrane proton channel. CF(1) has five subunits: alpha(3), beta(3), gamma(1), delta(1), epsilon(1). CF(0) has three main subunits: a(1), b(2) and c(9-12). The alpha and beta chains form an alternating ring which encloses part of the gamma chain. CF(1) is attached to CF(0) by a central stalk formed by the gamma and epsilon chains, while a peripheral stalk is formed by the delta and b chains.</text>
</comment>
<comment type="subcellular location">
    <subcellularLocation>
        <location evidence="1">Cell membrane</location>
        <topology evidence="1">Peripheral membrane protein</topology>
    </subcellularLocation>
</comment>
<comment type="similarity">
    <text evidence="1">Belongs to the ATPase alpha/beta chains family.</text>
</comment>
<gene>
    <name evidence="1" type="primary">atpA</name>
    <name type="ordered locus">BCE_5432</name>
</gene>
<accession>Q72XE6</accession>
<name>ATPA_BACC1</name>
<feature type="chain" id="PRO_0000238193" description="ATP synthase subunit alpha">
    <location>
        <begin position="1"/>
        <end position="502"/>
    </location>
</feature>
<feature type="region of interest" description="Disordered" evidence="2">
    <location>
        <begin position="115"/>
        <end position="135"/>
    </location>
</feature>
<feature type="binding site" evidence="1">
    <location>
        <begin position="169"/>
        <end position="176"/>
    </location>
    <ligand>
        <name>ATP</name>
        <dbReference type="ChEBI" id="CHEBI:30616"/>
    </ligand>
</feature>
<feature type="site" description="Required for activity" evidence="1">
    <location>
        <position position="362"/>
    </location>
</feature>
<keyword id="KW-0066">ATP synthesis</keyword>
<keyword id="KW-0067">ATP-binding</keyword>
<keyword id="KW-1003">Cell membrane</keyword>
<keyword id="KW-0139">CF(1)</keyword>
<keyword id="KW-0375">Hydrogen ion transport</keyword>
<keyword id="KW-0406">Ion transport</keyword>
<keyword id="KW-0472">Membrane</keyword>
<keyword id="KW-0547">Nucleotide-binding</keyword>
<keyword id="KW-1278">Translocase</keyword>
<keyword id="KW-0813">Transport</keyword>
<proteinExistence type="inferred from homology"/>